<name>ILVD_PSEAB</name>
<reference key="1">
    <citation type="journal article" date="2006" name="Genome Biol.">
        <title>Genomic analysis reveals that Pseudomonas aeruginosa virulence is combinatorial.</title>
        <authorList>
            <person name="Lee D.G."/>
            <person name="Urbach J.M."/>
            <person name="Wu G."/>
            <person name="Liberati N.T."/>
            <person name="Feinbaum R.L."/>
            <person name="Miyata S."/>
            <person name="Diggins L.T."/>
            <person name="He J."/>
            <person name="Saucier M."/>
            <person name="Deziel E."/>
            <person name="Friedman L."/>
            <person name="Li L."/>
            <person name="Grills G."/>
            <person name="Montgomery K."/>
            <person name="Kucherlapati R."/>
            <person name="Rahme L.G."/>
            <person name="Ausubel F.M."/>
        </authorList>
    </citation>
    <scope>NUCLEOTIDE SEQUENCE [LARGE SCALE GENOMIC DNA]</scope>
    <source>
        <strain>UCBPP-PA14</strain>
    </source>
</reference>
<accession>Q02U62</accession>
<evidence type="ECO:0000255" key="1">
    <source>
        <dbReference type="HAMAP-Rule" id="MF_00012"/>
    </source>
</evidence>
<protein>
    <recommendedName>
        <fullName evidence="1">Dihydroxy-acid dehydratase</fullName>
        <shortName evidence="1">DAD</shortName>
        <ecNumber evidence="1">4.2.1.9</ecNumber>
    </recommendedName>
</protein>
<dbReference type="EC" id="4.2.1.9" evidence="1"/>
<dbReference type="EMBL" id="CP000438">
    <property type="protein sequence ID" value="ABJ15317.1"/>
    <property type="molecule type" value="Genomic_DNA"/>
</dbReference>
<dbReference type="RefSeq" id="WP_003084436.1">
    <property type="nucleotide sequence ID" value="NZ_CP034244.1"/>
</dbReference>
<dbReference type="SMR" id="Q02U62"/>
<dbReference type="KEGG" id="pau:PA14_04630"/>
<dbReference type="PseudoCAP" id="PA14_04630"/>
<dbReference type="HOGENOM" id="CLU_014271_4_2_6"/>
<dbReference type="BioCyc" id="PAER208963:G1G74-385-MONOMER"/>
<dbReference type="UniPathway" id="UPA00047">
    <property type="reaction ID" value="UER00057"/>
</dbReference>
<dbReference type="UniPathway" id="UPA00049">
    <property type="reaction ID" value="UER00061"/>
</dbReference>
<dbReference type="Proteomes" id="UP000000653">
    <property type="component" value="Chromosome"/>
</dbReference>
<dbReference type="GO" id="GO:0005829">
    <property type="term" value="C:cytosol"/>
    <property type="evidence" value="ECO:0007669"/>
    <property type="project" value="TreeGrafter"/>
</dbReference>
<dbReference type="GO" id="GO:0051537">
    <property type="term" value="F:2 iron, 2 sulfur cluster binding"/>
    <property type="evidence" value="ECO:0007669"/>
    <property type="project" value="UniProtKB-UniRule"/>
</dbReference>
<dbReference type="GO" id="GO:0004160">
    <property type="term" value="F:dihydroxy-acid dehydratase activity"/>
    <property type="evidence" value="ECO:0007669"/>
    <property type="project" value="UniProtKB-UniRule"/>
</dbReference>
<dbReference type="GO" id="GO:0000287">
    <property type="term" value="F:magnesium ion binding"/>
    <property type="evidence" value="ECO:0007669"/>
    <property type="project" value="UniProtKB-UniRule"/>
</dbReference>
<dbReference type="GO" id="GO:0009097">
    <property type="term" value="P:isoleucine biosynthetic process"/>
    <property type="evidence" value="ECO:0007669"/>
    <property type="project" value="UniProtKB-UniRule"/>
</dbReference>
<dbReference type="GO" id="GO:0009099">
    <property type="term" value="P:L-valine biosynthetic process"/>
    <property type="evidence" value="ECO:0007669"/>
    <property type="project" value="UniProtKB-UniRule"/>
</dbReference>
<dbReference type="FunFam" id="3.50.30.80:FF:000001">
    <property type="entry name" value="Dihydroxy-acid dehydratase"/>
    <property type="match status" value="1"/>
</dbReference>
<dbReference type="Gene3D" id="3.50.30.80">
    <property type="entry name" value="IlvD/EDD C-terminal domain-like"/>
    <property type="match status" value="1"/>
</dbReference>
<dbReference type="HAMAP" id="MF_00012">
    <property type="entry name" value="IlvD"/>
    <property type="match status" value="1"/>
</dbReference>
<dbReference type="InterPro" id="IPR042096">
    <property type="entry name" value="Dihydro-acid_dehy_C"/>
</dbReference>
<dbReference type="InterPro" id="IPR004404">
    <property type="entry name" value="DihydroxyA_deHydtase"/>
</dbReference>
<dbReference type="InterPro" id="IPR020558">
    <property type="entry name" value="DiOHA_6PGluconate_deHydtase_CS"/>
</dbReference>
<dbReference type="InterPro" id="IPR056740">
    <property type="entry name" value="ILV_EDD_C"/>
</dbReference>
<dbReference type="InterPro" id="IPR000581">
    <property type="entry name" value="ILV_EDD_N"/>
</dbReference>
<dbReference type="InterPro" id="IPR037237">
    <property type="entry name" value="IlvD/EDD_N"/>
</dbReference>
<dbReference type="NCBIfam" id="TIGR00110">
    <property type="entry name" value="ilvD"/>
    <property type="match status" value="1"/>
</dbReference>
<dbReference type="NCBIfam" id="NF009103">
    <property type="entry name" value="PRK12448.1"/>
    <property type="match status" value="1"/>
</dbReference>
<dbReference type="PANTHER" id="PTHR43661">
    <property type="entry name" value="D-XYLONATE DEHYDRATASE"/>
    <property type="match status" value="1"/>
</dbReference>
<dbReference type="PANTHER" id="PTHR43661:SF3">
    <property type="entry name" value="D-XYLONATE DEHYDRATASE YAGF-RELATED"/>
    <property type="match status" value="1"/>
</dbReference>
<dbReference type="Pfam" id="PF24877">
    <property type="entry name" value="ILV_EDD_C"/>
    <property type="match status" value="1"/>
</dbReference>
<dbReference type="Pfam" id="PF00920">
    <property type="entry name" value="ILVD_EDD_N"/>
    <property type="match status" value="1"/>
</dbReference>
<dbReference type="SUPFAM" id="SSF143975">
    <property type="entry name" value="IlvD/EDD N-terminal domain-like"/>
    <property type="match status" value="1"/>
</dbReference>
<dbReference type="SUPFAM" id="SSF52016">
    <property type="entry name" value="LeuD/IlvD-like"/>
    <property type="match status" value="1"/>
</dbReference>
<dbReference type="PROSITE" id="PS00886">
    <property type="entry name" value="ILVD_EDD_1"/>
    <property type="match status" value="1"/>
</dbReference>
<dbReference type="PROSITE" id="PS00887">
    <property type="entry name" value="ILVD_EDD_2"/>
    <property type="match status" value="1"/>
</dbReference>
<feature type="chain" id="PRO_1000001034" description="Dihydroxy-acid dehydratase">
    <location>
        <begin position="1"/>
        <end position="612"/>
    </location>
</feature>
<feature type="active site" description="Proton acceptor" evidence="1">
    <location>
        <position position="515"/>
    </location>
</feature>
<feature type="binding site" evidence="1">
    <location>
        <position position="81"/>
    </location>
    <ligand>
        <name>Mg(2+)</name>
        <dbReference type="ChEBI" id="CHEBI:18420"/>
    </ligand>
</feature>
<feature type="binding site" evidence="1">
    <location>
        <position position="122"/>
    </location>
    <ligand>
        <name>[2Fe-2S] cluster</name>
        <dbReference type="ChEBI" id="CHEBI:190135"/>
    </ligand>
</feature>
<feature type="binding site" evidence="1">
    <location>
        <position position="123"/>
    </location>
    <ligand>
        <name>Mg(2+)</name>
        <dbReference type="ChEBI" id="CHEBI:18420"/>
    </ligand>
</feature>
<feature type="binding site" description="via carbamate group" evidence="1">
    <location>
        <position position="124"/>
    </location>
    <ligand>
        <name>Mg(2+)</name>
        <dbReference type="ChEBI" id="CHEBI:18420"/>
    </ligand>
</feature>
<feature type="binding site" evidence="1">
    <location>
        <position position="193"/>
    </location>
    <ligand>
        <name>[2Fe-2S] cluster</name>
        <dbReference type="ChEBI" id="CHEBI:190135"/>
    </ligand>
</feature>
<feature type="binding site" evidence="1">
    <location>
        <position position="489"/>
    </location>
    <ligand>
        <name>Mg(2+)</name>
        <dbReference type="ChEBI" id="CHEBI:18420"/>
    </ligand>
</feature>
<feature type="modified residue" description="N6-carboxylysine" evidence="1">
    <location>
        <position position="124"/>
    </location>
</feature>
<sequence length="612" mass="65160">MPDYRSKTSTHGRNMAGARALWRATGMKDEDFKKPIIAIANSFTQFVPGHVHLKDLGQLVAREIEKAGGVAKEFNTIAVDDGIAMGHDGMLYSLPSREIIADSVEYMVNAHCADAIVCISNCDKITPGMLMAALRLNIPVVFVSGGPMEAGKTKLASHGLDLVDAMVVAADDSCSDEKVAEYERSACPTCGSCSGMFTANSMNCLTEALGLSLPGNGSTLATHADREQLFLRAGRLAVELCQRYYGEGDDSVLPRNIANFKAFENAMTLDIAMGGSTNTILHLLAAAQEAEVPFDLRDIDRLSRKVPQLCKVAPNIQKYHMEDVHRAGGIFSILGELARGGLLHTDVPTVHSPSMADAIAQWDITQTRDEAVHTFFKAGPAGIPTQTAFSQNTRWPSLDDDRAEGCIRSVEHAYSKEGGLAVLYGNIALDGCVVKTAGVDESIHVFEGSAKIFESQDAAVKGILGDEVKAGDIVIIRYEGPKGGPGMQEMLYPTSYLKSKGLGKQCALLTDGRFSGGTSGLSIGHASPEAAAGGAIGLVQDGDKVLIDIPNRSINLLVSDEELAARRAEQDKKGWKPAAPRARRVSTALKAYALLATSADKGAVRNKALLDG</sequence>
<organism>
    <name type="scientific">Pseudomonas aeruginosa (strain UCBPP-PA14)</name>
    <dbReference type="NCBI Taxonomy" id="208963"/>
    <lineage>
        <taxon>Bacteria</taxon>
        <taxon>Pseudomonadati</taxon>
        <taxon>Pseudomonadota</taxon>
        <taxon>Gammaproteobacteria</taxon>
        <taxon>Pseudomonadales</taxon>
        <taxon>Pseudomonadaceae</taxon>
        <taxon>Pseudomonas</taxon>
    </lineage>
</organism>
<comment type="function">
    <text evidence="1">Functions in the biosynthesis of branched-chain amino acids. Catalyzes the dehydration of (2R,3R)-2,3-dihydroxy-3-methylpentanoate (2,3-dihydroxy-3-methylvalerate) into 2-oxo-3-methylpentanoate (2-oxo-3-methylvalerate) and of (2R)-2,3-dihydroxy-3-methylbutanoate (2,3-dihydroxyisovalerate) into 2-oxo-3-methylbutanoate (2-oxoisovalerate), the penultimate precursor to L-isoleucine and L-valine, respectively.</text>
</comment>
<comment type="catalytic activity">
    <reaction evidence="1">
        <text>(2R)-2,3-dihydroxy-3-methylbutanoate = 3-methyl-2-oxobutanoate + H2O</text>
        <dbReference type="Rhea" id="RHEA:24809"/>
        <dbReference type="ChEBI" id="CHEBI:11851"/>
        <dbReference type="ChEBI" id="CHEBI:15377"/>
        <dbReference type="ChEBI" id="CHEBI:49072"/>
        <dbReference type="EC" id="4.2.1.9"/>
    </reaction>
    <physiologicalReaction direction="left-to-right" evidence="1">
        <dbReference type="Rhea" id="RHEA:24810"/>
    </physiologicalReaction>
</comment>
<comment type="catalytic activity">
    <reaction evidence="1">
        <text>(2R,3R)-2,3-dihydroxy-3-methylpentanoate = (S)-3-methyl-2-oxopentanoate + H2O</text>
        <dbReference type="Rhea" id="RHEA:27694"/>
        <dbReference type="ChEBI" id="CHEBI:15377"/>
        <dbReference type="ChEBI" id="CHEBI:35146"/>
        <dbReference type="ChEBI" id="CHEBI:49258"/>
        <dbReference type="EC" id="4.2.1.9"/>
    </reaction>
    <physiologicalReaction direction="left-to-right" evidence="1">
        <dbReference type="Rhea" id="RHEA:27695"/>
    </physiologicalReaction>
</comment>
<comment type="cofactor">
    <cofactor evidence="1">
        <name>[2Fe-2S] cluster</name>
        <dbReference type="ChEBI" id="CHEBI:190135"/>
    </cofactor>
    <text evidence="1">Binds 1 [2Fe-2S] cluster per subunit. This cluster acts as a Lewis acid cofactor.</text>
</comment>
<comment type="cofactor">
    <cofactor evidence="1">
        <name>Mg(2+)</name>
        <dbReference type="ChEBI" id="CHEBI:18420"/>
    </cofactor>
</comment>
<comment type="pathway">
    <text evidence="1">Amino-acid biosynthesis; L-isoleucine biosynthesis; L-isoleucine from 2-oxobutanoate: step 3/4.</text>
</comment>
<comment type="pathway">
    <text evidence="1">Amino-acid biosynthesis; L-valine biosynthesis; L-valine from pyruvate: step 3/4.</text>
</comment>
<comment type="subunit">
    <text evidence="1">Homodimer.</text>
</comment>
<comment type="similarity">
    <text evidence="1">Belongs to the IlvD/Edd family.</text>
</comment>
<gene>
    <name evidence="1" type="primary">ilvD</name>
    <name type="ordered locus">PA14_04630</name>
</gene>
<proteinExistence type="inferred from homology"/>
<keyword id="KW-0001">2Fe-2S</keyword>
<keyword id="KW-0028">Amino-acid biosynthesis</keyword>
<keyword id="KW-0100">Branched-chain amino acid biosynthesis</keyword>
<keyword id="KW-0408">Iron</keyword>
<keyword id="KW-0411">Iron-sulfur</keyword>
<keyword id="KW-0456">Lyase</keyword>
<keyword id="KW-0460">Magnesium</keyword>
<keyword id="KW-0479">Metal-binding</keyword>